<evidence type="ECO:0000255" key="1">
    <source>
        <dbReference type="HAMAP-Rule" id="MF_00182"/>
    </source>
</evidence>
<accession>A0AJS8</accession>
<dbReference type="EC" id="2.1.2.9" evidence="1"/>
<dbReference type="EMBL" id="AM263198">
    <property type="protein sequence ID" value="CAK21260.1"/>
    <property type="molecule type" value="Genomic_DNA"/>
</dbReference>
<dbReference type="RefSeq" id="WP_011702612.1">
    <property type="nucleotide sequence ID" value="NC_008555.1"/>
</dbReference>
<dbReference type="SMR" id="A0AJS8"/>
<dbReference type="STRING" id="386043.lwe1842"/>
<dbReference type="GeneID" id="61189743"/>
<dbReference type="KEGG" id="lwe:lwe1842"/>
<dbReference type="eggNOG" id="COG0223">
    <property type="taxonomic scope" value="Bacteria"/>
</dbReference>
<dbReference type="HOGENOM" id="CLU_033347_1_1_9"/>
<dbReference type="OrthoDB" id="9802815at2"/>
<dbReference type="Proteomes" id="UP000000779">
    <property type="component" value="Chromosome"/>
</dbReference>
<dbReference type="GO" id="GO:0005829">
    <property type="term" value="C:cytosol"/>
    <property type="evidence" value="ECO:0007669"/>
    <property type="project" value="TreeGrafter"/>
</dbReference>
<dbReference type="GO" id="GO:0004479">
    <property type="term" value="F:methionyl-tRNA formyltransferase activity"/>
    <property type="evidence" value="ECO:0007669"/>
    <property type="project" value="UniProtKB-UniRule"/>
</dbReference>
<dbReference type="CDD" id="cd08646">
    <property type="entry name" value="FMT_core_Met-tRNA-FMT_N"/>
    <property type="match status" value="1"/>
</dbReference>
<dbReference type="CDD" id="cd08704">
    <property type="entry name" value="Met_tRNA_FMT_C"/>
    <property type="match status" value="1"/>
</dbReference>
<dbReference type="FunFam" id="3.40.50.12230:FF:000001">
    <property type="entry name" value="Methionyl-tRNA formyltransferase"/>
    <property type="match status" value="1"/>
</dbReference>
<dbReference type="Gene3D" id="3.40.50.12230">
    <property type="match status" value="1"/>
</dbReference>
<dbReference type="HAMAP" id="MF_00182">
    <property type="entry name" value="Formyl_trans"/>
    <property type="match status" value="1"/>
</dbReference>
<dbReference type="InterPro" id="IPR005794">
    <property type="entry name" value="Fmt"/>
</dbReference>
<dbReference type="InterPro" id="IPR005793">
    <property type="entry name" value="Formyl_trans_C"/>
</dbReference>
<dbReference type="InterPro" id="IPR002376">
    <property type="entry name" value="Formyl_transf_N"/>
</dbReference>
<dbReference type="InterPro" id="IPR036477">
    <property type="entry name" value="Formyl_transf_N_sf"/>
</dbReference>
<dbReference type="InterPro" id="IPR011034">
    <property type="entry name" value="Formyl_transferase-like_C_sf"/>
</dbReference>
<dbReference type="InterPro" id="IPR001555">
    <property type="entry name" value="GART_AS"/>
</dbReference>
<dbReference type="InterPro" id="IPR044135">
    <property type="entry name" value="Met-tRNA-FMT_C"/>
</dbReference>
<dbReference type="InterPro" id="IPR041711">
    <property type="entry name" value="Met-tRNA-FMT_N"/>
</dbReference>
<dbReference type="NCBIfam" id="TIGR00460">
    <property type="entry name" value="fmt"/>
    <property type="match status" value="1"/>
</dbReference>
<dbReference type="PANTHER" id="PTHR11138">
    <property type="entry name" value="METHIONYL-TRNA FORMYLTRANSFERASE"/>
    <property type="match status" value="1"/>
</dbReference>
<dbReference type="PANTHER" id="PTHR11138:SF5">
    <property type="entry name" value="METHIONYL-TRNA FORMYLTRANSFERASE, MITOCHONDRIAL"/>
    <property type="match status" value="1"/>
</dbReference>
<dbReference type="Pfam" id="PF02911">
    <property type="entry name" value="Formyl_trans_C"/>
    <property type="match status" value="1"/>
</dbReference>
<dbReference type="Pfam" id="PF00551">
    <property type="entry name" value="Formyl_trans_N"/>
    <property type="match status" value="1"/>
</dbReference>
<dbReference type="SUPFAM" id="SSF50486">
    <property type="entry name" value="FMT C-terminal domain-like"/>
    <property type="match status" value="1"/>
</dbReference>
<dbReference type="SUPFAM" id="SSF53328">
    <property type="entry name" value="Formyltransferase"/>
    <property type="match status" value="1"/>
</dbReference>
<dbReference type="PROSITE" id="PS00373">
    <property type="entry name" value="GART"/>
    <property type="match status" value="1"/>
</dbReference>
<feature type="chain" id="PRO_1000020094" description="Methionyl-tRNA formyltransferase">
    <location>
        <begin position="1"/>
        <end position="312"/>
    </location>
</feature>
<feature type="binding site" evidence="1">
    <location>
        <begin position="109"/>
        <end position="112"/>
    </location>
    <ligand>
        <name>(6S)-5,6,7,8-tetrahydrofolate</name>
        <dbReference type="ChEBI" id="CHEBI:57453"/>
    </ligand>
</feature>
<sequence>MTKIIFMGTPAFSVPILEQLASTYDVIAVVTQPDRPVGRKRILTPPPVKKAALELAIPVFQPEKLRTSSELNELIALEADLLVTAAYGQILPNSLLESPKHGAINVHASLLPEYRGGAPVHYALLDGKTETGVTIMYMVEKLDAGDMISQRKIPITEADNTGTMFDKLSKLGAELLMDTLPDFLAGKITAIAQDPEKVTFARNISREQEKIDWTQPGRTIFNQIRGLSPWPVAYTTLEEKPFKIWEATYDDTKVEGEPGTILMDKTSLKIIAGDGTLIVPTVIQPAGKPKMDVHSFMSGAGRNLSKSTRFGE</sequence>
<reference key="1">
    <citation type="journal article" date="2006" name="J. Bacteriol.">
        <title>Whole-genome sequence of Listeria welshimeri reveals common steps in genome reduction with Listeria innocua as compared to Listeria monocytogenes.</title>
        <authorList>
            <person name="Hain T."/>
            <person name="Steinweg C."/>
            <person name="Kuenne C.T."/>
            <person name="Billion A."/>
            <person name="Ghai R."/>
            <person name="Chatterjee S.S."/>
            <person name="Domann E."/>
            <person name="Kaerst U."/>
            <person name="Goesmann A."/>
            <person name="Bekel T."/>
            <person name="Bartels D."/>
            <person name="Kaiser O."/>
            <person name="Meyer F."/>
            <person name="Puehler A."/>
            <person name="Weisshaar B."/>
            <person name="Wehland J."/>
            <person name="Liang C."/>
            <person name="Dandekar T."/>
            <person name="Lampidis R."/>
            <person name="Kreft J."/>
            <person name="Goebel W."/>
            <person name="Chakraborty T."/>
        </authorList>
    </citation>
    <scope>NUCLEOTIDE SEQUENCE [LARGE SCALE GENOMIC DNA]</scope>
    <source>
        <strain>ATCC 35897 / DSM 20650 / CCUG 15529 / CIP 8149 / NCTC 11857 / SLCC 5334 / V8</strain>
    </source>
</reference>
<keyword id="KW-0648">Protein biosynthesis</keyword>
<keyword id="KW-0808">Transferase</keyword>
<organism>
    <name type="scientific">Listeria welshimeri serovar 6b (strain ATCC 35897 / DSM 20650 / CCUG 15529 / CIP 8149 / NCTC 11857 / SLCC 5334 / V8)</name>
    <dbReference type="NCBI Taxonomy" id="386043"/>
    <lineage>
        <taxon>Bacteria</taxon>
        <taxon>Bacillati</taxon>
        <taxon>Bacillota</taxon>
        <taxon>Bacilli</taxon>
        <taxon>Bacillales</taxon>
        <taxon>Listeriaceae</taxon>
        <taxon>Listeria</taxon>
    </lineage>
</organism>
<proteinExistence type="inferred from homology"/>
<name>FMT_LISW6</name>
<comment type="function">
    <text evidence="1">Attaches a formyl group to the free amino group of methionyl-tRNA(fMet). The formyl group appears to play a dual role in the initiator identity of N-formylmethionyl-tRNA by promoting its recognition by IF2 and preventing the misappropriation of this tRNA by the elongation apparatus.</text>
</comment>
<comment type="catalytic activity">
    <reaction evidence="1">
        <text>L-methionyl-tRNA(fMet) + (6R)-10-formyltetrahydrofolate = N-formyl-L-methionyl-tRNA(fMet) + (6S)-5,6,7,8-tetrahydrofolate + H(+)</text>
        <dbReference type="Rhea" id="RHEA:24380"/>
        <dbReference type="Rhea" id="RHEA-COMP:9952"/>
        <dbReference type="Rhea" id="RHEA-COMP:9953"/>
        <dbReference type="ChEBI" id="CHEBI:15378"/>
        <dbReference type="ChEBI" id="CHEBI:57453"/>
        <dbReference type="ChEBI" id="CHEBI:78530"/>
        <dbReference type="ChEBI" id="CHEBI:78844"/>
        <dbReference type="ChEBI" id="CHEBI:195366"/>
        <dbReference type="EC" id="2.1.2.9"/>
    </reaction>
</comment>
<comment type="similarity">
    <text evidence="1">Belongs to the Fmt family.</text>
</comment>
<gene>
    <name evidence="1" type="primary">fmt</name>
    <name type="ordered locus">lwe1842</name>
</gene>
<protein>
    <recommendedName>
        <fullName evidence="1">Methionyl-tRNA formyltransferase</fullName>
        <ecNumber evidence="1">2.1.2.9</ecNumber>
    </recommendedName>
</protein>